<reference key="1">
    <citation type="submission" date="2008-10" db="EMBL/GenBank/DDBJ databases">
        <title>Genome sequence of Bacillus cereus G9842.</title>
        <authorList>
            <person name="Dodson R.J."/>
            <person name="Durkin A.S."/>
            <person name="Rosovitz M.J."/>
            <person name="Rasko D.A."/>
            <person name="Hoffmaster A."/>
            <person name="Ravel J."/>
            <person name="Sutton G."/>
        </authorList>
    </citation>
    <scope>NUCLEOTIDE SEQUENCE [LARGE SCALE GENOMIC DNA]</scope>
    <source>
        <strain>G9842</strain>
    </source>
</reference>
<feature type="propeptide" id="PRO_0000459856" evidence="1">
    <location>
        <begin position="1"/>
        <end position="9"/>
    </location>
</feature>
<feature type="chain" id="PRO_1000128692" description="Large ribosomal subunit protein bL27">
    <location>
        <begin position="10"/>
        <end position="96"/>
    </location>
</feature>
<feature type="region of interest" description="Disordered" evidence="3">
    <location>
        <begin position="14"/>
        <end position="36"/>
    </location>
</feature>
<gene>
    <name evidence="2" type="primary">rpmA</name>
    <name type="ordered locus">BCG9842_B0674</name>
</gene>
<accession>B7IIV4</accession>
<comment type="PTM">
    <text evidence="1">The N-terminus is cleaved by ribosomal processing cysteine protease Prp.</text>
</comment>
<comment type="similarity">
    <text evidence="2">Belongs to the bacterial ribosomal protein bL27 family.</text>
</comment>
<name>RL27_BACC2</name>
<proteinExistence type="inferred from homology"/>
<sequence>MLRLDLQFFASKKGVGSTKNGRDSQSKRLGAKRADGQTVSGGSILYRQRGTKIYPGVNVGRGGDDTLYAKVDGVVRFERLGRDRKQVSVYPVAQEA</sequence>
<organism>
    <name type="scientific">Bacillus cereus (strain G9842)</name>
    <dbReference type="NCBI Taxonomy" id="405531"/>
    <lineage>
        <taxon>Bacteria</taxon>
        <taxon>Bacillati</taxon>
        <taxon>Bacillota</taxon>
        <taxon>Bacilli</taxon>
        <taxon>Bacillales</taxon>
        <taxon>Bacillaceae</taxon>
        <taxon>Bacillus</taxon>
        <taxon>Bacillus cereus group</taxon>
    </lineage>
</organism>
<dbReference type="EMBL" id="CP001186">
    <property type="protein sequence ID" value="ACK96381.1"/>
    <property type="molecule type" value="Genomic_DNA"/>
</dbReference>
<dbReference type="RefSeq" id="WP_000944957.1">
    <property type="nucleotide sequence ID" value="NC_011772.1"/>
</dbReference>
<dbReference type="SMR" id="B7IIV4"/>
<dbReference type="GeneID" id="92884982"/>
<dbReference type="KEGG" id="bcg:BCG9842_B0674"/>
<dbReference type="HOGENOM" id="CLU_095424_4_0_9"/>
<dbReference type="Proteomes" id="UP000006744">
    <property type="component" value="Chromosome"/>
</dbReference>
<dbReference type="GO" id="GO:0022625">
    <property type="term" value="C:cytosolic large ribosomal subunit"/>
    <property type="evidence" value="ECO:0007669"/>
    <property type="project" value="TreeGrafter"/>
</dbReference>
<dbReference type="GO" id="GO:0003735">
    <property type="term" value="F:structural constituent of ribosome"/>
    <property type="evidence" value="ECO:0007669"/>
    <property type="project" value="InterPro"/>
</dbReference>
<dbReference type="GO" id="GO:0006412">
    <property type="term" value="P:translation"/>
    <property type="evidence" value="ECO:0007669"/>
    <property type="project" value="UniProtKB-UniRule"/>
</dbReference>
<dbReference type="FunFam" id="2.40.50.100:FF:000004">
    <property type="entry name" value="50S ribosomal protein L27"/>
    <property type="match status" value="1"/>
</dbReference>
<dbReference type="Gene3D" id="2.40.50.100">
    <property type="match status" value="1"/>
</dbReference>
<dbReference type="HAMAP" id="MF_00539">
    <property type="entry name" value="Ribosomal_bL27"/>
    <property type="match status" value="1"/>
</dbReference>
<dbReference type="InterPro" id="IPR001684">
    <property type="entry name" value="Ribosomal_bL27"/>
</dbReference>
<dbReference type="InterPro" id="IPR018261">
    <property type="entry name" value="Ribosomal_bL27_CS"/>
</dbReference>
<dbReference type="NCBIfam" id="TIGR00062">
    <property type="entry name" value="L27"/>
    <property type="match status" value="1"/>
</dbReference>
<dbReference type="PANTHER" id="PTHR15893:SF0">
    <property type="entry name" value="LARGE RIBOSOMAL SUBUNIT PROTEIN BL27M"/>
    <property type="match status" value="1"/>
</dbReference>
<dbReference type="PANTHER" id="PTHR15893">
    <property type="entry name" value="RIBOSOMAL PROTEIN L27"/>
    <property type="match status" value="1"/>
</dbReference>
<dbReference type="Pfam" id="PF01016">
    <property type="entry name" value="Ribosomal_L27"/>
    <property type="match status" value="1"/>
</dbReference>
<dbReference type="PRINTS" id="PR00063">
    <property type="entry name" value="RIBOSOMALL27"/>
</dbReference>
<dbReference type="SUPFAM" id="SSF110324">
    <property type="entry name" value="Ribosomal L27 protein-like"/>
    <property type="match status" value="1"/>
</dbReference>
<dbReference type="PROSITE" id="PS00831">
    <property type="entry name" value="RIBOSOMAL_L27"/>
    <property type="match status" value="1"/>
</dbReference>
<evidence type="ECO:0000250" key="1">
    <source>
        <dbReference type="UniProtKB" id="Q2FXT0"/>
    </source>
</evidence>
<evidence type="ECO:0000255" key="2">
    <source>
        <dbReference type="HAMAP-Rule" id="MF_00539"/>
    </source>
</evidence>
<evidence type="ECO:0000256" key="3">
    <source>
        <dbReference type="SAM" id="MobiDB-lite"/>
    </source>
</evidence>
<evidence type="ECO:0000305" key="4"/>
<keyword id="KW-0687">Ribonucleoprotein</keyword>
<keyword id="KW-0689">Ribosomal protein</keyword>
<protein>
    <recommendedName>
        <fullName evidence="2">Large ribosomal subunit protein bL27</fullName>
    </recommendedName>
    <alternativeName>
        <fullName evidence="4">50S ribosomal protein L27</fullName>
    </alternativeName>
</protein>